<dbReference type="EC" id="1.14.-.-"/>
<dbReference type="EMBL" id="AL123456">
    <property type="protein sequence ID" value="CCP46509.1"/>
    <property type="molecule type" value="Genomic_DNA"/>
</dbReference>
<dbReference type="PIR" id="F70791">
    <property type="entry name" value="F70791"/>
</dbReference>
<dbReference type="RefSeq" id="NP_218202.1">
    <property type="nucleotide sequence ID" value="NC_000962.3"/>
</dbReference>
<dbReference type="RefSeq" id="WP_003419754.1">
    <property type="nucleotide sequence ID" value="NZ_NVQJ01000028.1"/>
</dbReference>
<dbReference type="SMR" id="P9WPM5"/>
<dbReference type="FunCoup" id="P9WPM5">
    <property type="interactions" value="32"/>
</dbReference>
<dbReference type="STRING" id="83332.Rv3685c"/>
<dbReference type="PaxDb" id="83332-Rv3685c"/>
<dbReference type="DNASU" id="885625"/>
<dbReference type="GeneID" id="885625"/>
<dbReference type="KEGG" id="mtu:Rv3685c"/>
<dbReference type="KEGG" id="mtv:RVBD_3685c"/>
<dbReference type="TubercuList" id="Rv3685c"/>
<dbReference type="eggNOG" id="COG2124">
    <property type="taxonomic scope" value="Bacteria"/>
</dbReference>
<dbReference type="InParanoid" id="P9WPM5"/>
<dbReference type="OrthoDB" id="7376058at2"/>
<dbReference type="PhylomeDB" id="P9WPM5"/>
<dbReference type="Proteomes" id="UP000001584">
    <property type="component" value="Chromosome"/>
</dbReference>
<dbReference type="GO" id="GO:0005886">
    <property type="term" value="C:plasma membrane"/>
    <property type="evidence" value="ECO:0007005"/>
    <property type="project" value="MTBBASE"/>
</dbReference>
<dbReference type="GO" id="GO:0020037">
    <property type="term" value="F:heme binding"/>
    <property type="evidence" value="ECO:0007669"/>
    <property type="project" value="InterPro"/>
</dbReference>
<dbReference type="GO" id="GO:0005506">
    <property type="term" value="F:iron ion binding"/>
    <property type="evidence" value="ECO:0007669"/>
    <property type="project" value="InterPro"/>
</dbReference>
<dbReference type="GO" id="GO:0004497">
    <property type="term" value="F:monooxygenase activity"/>
    <property type="evidence" value="ECO:0007669"/>
    <property type="project" value="UniProtKB-KW"/>
</dbReference>
<dbReference type="GO" id="GO:0016491">
    <property type="term" value="F:oxidoreductase activity"/>
    <property type="evidence" value="ECO:0000318"/>
    <property type="project" value="GO_Central"/>
</dbReference>
<dbReference type="GO" id="GO:0016705">
    <property type="term" value="F:oxidoreductase activity, acting on paired donors, with incorporation or reduction of molecular oxygen"/>
    <property type="evidence" value="ECO:0007669"/>
    <property type="project" value="InterPro"/>
</dbReference>
<dbReference type="CDD" id="cd11053">
    <property type="entry name" value="CYP110-like"/>
    <property type="match status" value="1"/>
</dbReference>
<dbReference type="Gene3D" id="1.10.630.10">
    <property type="entry name" value="Cytochrome P450"/>
    <property type="match status" value="1"/>
</dbReference>
<dbReference type="InterPro" id="IPR001128">
    <property type="entry name" value="Cyt_P450"/>
</dbReference>
<dbReference type="InterPro" id="IPR017972">
    <property type="entry name" value="Cyt_P450_CS"/>
</dbReference>
<dbReference type="InterPro" id="IPR002401">
    <property type="entry name" value="Cyt_P450_E_grp-I"/>
</dbReference>
<dbReference type="InterPro" id="IPR036396">
    <property type="entry name" value="Cyt_P450_sf"/>
</dbReference>
<dbReference type="InterPro" id="IPR050121">
    <property type="entry name" value="Cytochrome_P450_monoxygenase"/>
</dbReference>
<dbReference type="PANTHER" id="PTHR24305">
    <property type="entry name" value="CYTOCHROME P450"/>
    <property type="match status" value="1"/>
</dbReference>
<dbReference type="PANTHER" id="PTHR24305:SF166">
    <property type="entry name" value="CYTOCHROME P450 12A4, MITOCHONDRIAL-RELATED"/>
    <property type="match status" value="1"/>
</dbReference>
<dbReference type="Pfam" id="PF00067">
    <property type="entry name" value="p450"/>
    <property type="match status" value="1"/>
</dbReference>
<dbReference type="PRINTS" id="PR00463">
    <property type="entry name" value="EP450I"/>
</dbReference>
<dbReference type="PRINTS" id="PR00385">
    <property type="entry name" value="P450"/>
</dbReference>
<dbReference type="SUPFAM" id="SSF48264">
    <property type="entry name" value="Cytochrome P450"/>
    <property type="match status" value="1"/>
</dbReference>
<dbReference type="PROSITE" id="PS00086">
    <property type="entry name" value="CYTOCHROME_P450"/>
    <property type="match status" value="1"/>
</dbReference>
<accession>P9WPM5</accession>
<accession>L0TDI2</accession>
<accession>O69653</accession>
<gene>
    <name type="primary">cyp137</name>
    <name type="ordered locus">Rv3685c</name>
    <name type="ORF">MTV025.033c</name>
</gene>
<protein>
    <recommendedName>
        <fullName>Putative cytochrome P450 137</fullName>
        <ecNumber>1.14.-.-</ecNumber>
    </recommendedName>
</protein>
<comment type="cofactor">
    <cofactor evidence="1">
        <name>heme</name>
        <dbReference type="ChEBI" id="CHEBI:30413"/>
    </cofactor>
</comment>
<comment type="similarity">
    <text evidence="2">Belongs to the cytochrome P450 family.</text>
</comment>
<evidence type="ECO:0000250" key="1"/>
<evidence type="ECO:0000305" key="2"/>
<keyword id="KW-0349">Heme</keyword>
<keyword id="KW-0408">Iron</keyword>
<keyword id="KW-0479">Metal-binding</keyword>
<keyword id="KW-0503">Monooxygenase</keyword>
<keyword id="KW-0560">Oxidoreductase</keyword>
<keyword id="KW-1185">Reference proteome</keyword>
<feature type="chain" id="PRO_0000052296" description="Putative cytochrome P450 137">
    <location>
        <begin position="1"/>
        <end position="476"/>
    </location>
</feature>
<feature type="binding site" description="axial binding residue" evidence="1">
    <location>
        <position position="422"/>
    </location>
    <ligand>
        <name>heme</name>
        <dbReference type="ChEBI" id="CHEBI:30413"/>
    </ligand>
    <ligandPart>
        <name>Fe</name>
        <dbReference type="ChEBI" id="CHEBI:18248"/>
    </ligandPart>
</feature>
<proteinExistence type="evidence at protein level"/>
<reference key="1">
    <citation type="journal article" date="1998" name="Nature">
        <title>Deciphering the biology of Mycobacterium tuberculosis from the complete genome sequence.</title>
        <authorList>
            <person name="Cole S.T."/>
            <person name="Brosch R."/>
            <person name="Parkhill J."/>
            <person name="Garnier T."/>
            <person name="Churcher C.M."/>
            <person name="Harris D.E."/>
            <person name="Gordon S.V."/>
            <person name="Eiglmeier K."/>
            <person name="Gas S."/>
            <person name="Barry C.E. III"/>
            <person name="Tekaia F."/>
            <person name="Badcock K."/>
            <person name="Basham D."/>
            <person name="Brown D."/>
            <person name="Chillingworth T."/>
            <person name="Connor R."/>
            <person name="Davies R.M."/>
            <person name="Devlin K."/>
            <person name="Feltwell T."/>
            <person name="Gentles S."/>
            <person name="Hamlin N."/>
            <person name="Holroyd S."/>
            <person name="Hornsby T."/>
            <person name="Jagels K."/>
            <person name="Krogh A."/>
            <person name="McLean J."/>
            <person name="Moule S."/>
            <person name="Murphy L.D."/>
            <person name="Oliver S."/>
            <person name="Osborne J."/>
            <person name="Quail M.A."/>
            <person name="Rajandream M.A."/>
            <person name="Rogers J."/>
            <person name="Rutter S."/>
            <person name="Seeger K."/>
            <person name="Skelton S."/>
            <person name="Squares S."/>
            <person name="Squares R."/>
            <person name="Sulston J.E."/>
            <person name="Taylor K."/>
            <person name="Whitehead S."/>
            <person name="Barrell B.G."/>
        </authorList>
    </citation>
    <scope>NUCLEOTIDE SEQUENCE [LARGE SCALE GENOMIC DNA]</scope>
    <source>
        <strain>ATCC 25618 / H37Rv</strain>
    </source>
</reference>
<reference key="2">
    <citation type="journal article" date="2011" name="Mol. Cell. Proteomics">
        <title>Proteogenomic analysis of Mycobacterium tuberculosis by high resolution mass spectrometry.</title>
        <authorList>
            <person name="Kelkar D.S."/>
            <person name="Kumar D."/>
            <person name="Kumar P."/>
            <person name="Balakrishnan L."/>
            <person name="Muthusamy B."/>
            <person name="Yadav A.K."/>
            <person name="Shrivastava P."/>
            <person name="Marimuthu A."/>
            <person name="Anand S."/>
            <person name="Sundaram H."/>
            <person name="Kingsbury R."/>
            <person name="Harsha H.C."/>
            <person name="Nair B."/>
            <person name="Prasad T.S."/>
            <person name="Chauhan D.S."/>
            <person name="Katoch K."/>
            <person name="Katoch V.M."/>
            <person name="Kumar P."/>
            <person name="Chaerkady R."/>
            <person name="Ramachandran S."/>
            <person name="Dash D."/>
            <person name="Pandey A."/>
        </authorList>
    </citation>
    <scope>IDENTIFICATION BY MASS SPECTROMETRY [LARGE SCALE ANALYSIS]</scope>
    <source>
        <strain>ATCC 25618 / H37Rv</strain>
    </source>
</reference>
<sequence length="476" mass="52266">MVLRSLASPAALTDPKRCASVVGVAAFAVRREHAPDALGGPPGLPAPRGFRAAFAAAYAVAYLAGGERRMLRLIRRYGPIMTMPILSLGDVAIVSDSALAKEVFTAPTDVLLGGEGVGPAAAIYGSGSMFVQEEPEHLRRRKLLTPPLHGAALDRYVPIIENSTRAAMHTWPVDRPFAMLTVARSLMLDVIVKVIFGVDDPEEVRRLGRPFERLLNLGVSEQLTVRYALRRLGALRVWPARARANTEIDDVVMALIAQRRADPRLGERHDVLSLLVSARGESGEQLSDSEIRDDLITLVLAGHETTATTLAWAFDLLLHHPDALRRVRAEAVGGGEAFTTAVINETLRVRPPAPLTARVAAQPLTIGGYRVEAGTRIVVHIIAINRSAEVYEHPHEFRPERFLGTRPQTYAWVPFGGGVKRCLGANFSMRELITVLHVLLREGEFTAVDDEPERIVRRSIMLVPRRGTRVRFRPAR</sequence>
<organism>
    <name type="scientific">Mycobacterium tuberculosis (strain ATCC 25618 / H37Rv)</name>
    <dbReference type="NCBI Taxonomy" id="83332"/>
    <lineage>
        <taxon>Bacteria</taxon>
        <taxon>Bacillati</taxon>
        <taxon>Actinomycetota</taxon>
        <taxon>Actinomycetes</taxon>
        <taxon>Mycobacteriales</taxon>
        <taxon>Mycobacteriaceae</taxon>
        <taxon>Mycobacterium</taxon>
        <taxon>Mycobacterium tuberculosis complex</taxon>
    </lineage>
</organism>
<name>CP137_MYCTU</name>